<comment type="function">
    <text evidence="1">Endonuclease that specifically degrades the RNA of RNA-DNA hybrids.</text>
</comment>
<comment type="catalytic activity">
    <reaction evidence="1">
        <text>Endonucleolytic cleavage to 5'-phosphomonoester.</text>
        <dbReference type="EC" id="3.1.26.4"/>
    </reaction>
</comment>
<comment type="cofactor">
    <cofactor evidence="1">
        <name>Mn(2+)</name>
        <dbReference type="ChEBI" id="CHEBI:29035"/>
    </cofactor>
    <cofactor evidence="1">
        <name>Mg(2+)</name>
        <dbReference type="ChEBI" id="CHEBI:18420"/>
    </cofactor>
    <text evidence="1">Manganese or magnesium. Binds 1 divalent metal ion per monomer in the absence of substrate. May bind a second metal ion after substrate binding.</text>
</comment>
<comment type="subcellular location">
    <subcellularLocation>
        <location evidence="1">Cytoplasm</location>
    </subcellularLocation>
</comment>
<comment type="similarity">
    <text evidence="1">Belongs to the RNase HII family.</text>
</comment>
<gene>
    <name evidence="1" type="primary">rnhB</name>
    <name type="ordered locus">Acid345_2878</name>
</gene>
<reference key="1">
    <citation type="journal article" date="2009" name="Appl. Environ. Microbiol.">
        <title>Three genomes from the phylum Acidobacteria provide insight into the lifestyles of these microorganisms in soils.</title>
        <authorList>
            <person name="Ward N.L."/>
            <person name="Challacombe J.F."/>
            <person name="Janssen P.H."/>
            <person name="Henrissat B."/>
            <person name="Coutinho P.M."/>
            <person name="Wu M."/>
            <person name="Xie G."/>
            <person name="Haft D.H."/>
            <person name="Sait M."/>
            <person name="Badger J."/>
            <person name="Barabote R.D."/>
            <person name="Bradley B."/>
            <person name="Brettin T.S."/>
            <person name="Brinkac L.M."/>
            <person name="Bruce D."/>
            <person name="Creasy T."/>
            <person name="Daugherty S.C."/>
            <person name="Davidsen T.M."/>
            <person name="DeBoy R.T."/>
            <person name="Detter J.C."/>
            <person name="Dodson R.J."/>
            <person name="Durkin A.S."/>
            <person name="Ganapathy A."/>
            <person name="Gwinn-Giglio M."/>
            <person name="Han C.S."/>
            <person name="Khouri H."/>
            <person name="Kiss H."/>
            <person name="Kothari S.P."/>
            <person name="Madupu R."/>
            <person name="Nelson K.E."/>
            <person name="Nelson W.C."/>
            <person name="Paulsen I."/>
            <person name="Penn K."/>
            <person name="Ren Q."/>
            <person name="Rosovitz M.J."/>
            <person name="Selengut J.D."/>
            <person name="Shrivastava S."/>
            <person name="Sullivan S.A."/>
            <person name="Tapia R."/>
            <person name="Thompson L.S."/>
            <person name="Watkins K.L."/>
            <person name="Yang Q."/>
            <person name="Yu C."/>
            <person name="Zafar N."/>
            <person name="Zhou L."/>
            <person name="Kuske C.R."/>
        </authorList>
    </citation>
    <scope>NUCLEOTIDE SEQUENCE [LARGE SCALE GENOMIC DNA]</scope>
    <source>
        <strain>Ellin345</strain>
    </source>
</reference>
<evidence type="ECO:0000255" key="1">
    <source>
        <dbReference type="HAMAP-Rule" id="MF_00052"/>
    </source>
</evidence>
<evidence type="ECO:0000255" key="2">
    <source>
        <dbReference type="PROSITE-ProRule" id="PRU01319"/>
    </source>
</evidence>
<sequence>MVRPKKKPVLGKDGKPLSAAAAKLRLLKRLKCTTKYEKLAADSGAKLIAGIDEVGRGALFGPVVAAAVILDPNYRIKGLRDSKLLPAETREILSKRIREHCIAWSIAAVDVARIDQLNIYWASNLAMKHAVRGLSCQPDHLLIDAMKLDLDCAQTPIIHGDALSASIAAASIIAKVHRDALIREWAPIFPEYDLASNKGYSAPKHIKALREFGPSPLHRQSFAPVWMASAPQEVLEFMLEETADTAVPPEVLED</sequence>
<name>RNH2_KORVE</name>
<proteinExistence type="inferred from homology"/>
<accession>Q1IMM1</accession>
<feature type="chain" id="PRO_0000334851" description="Ribonuclease HII">
    <location>
        <begin position="1"/>
        <end position="254"/>
    </location>
</feature>
<feature type="domain" description="RNase H type-2" evidence="2">
    <location>
        <begin position="46"/>
        <end position="234"/>
    </location>
</feature>
<feature type="binding site" evidence="1">
    <location>
        <position position="52"/>
    </location>
    <ligand>
        <name>a divalent metal cation</name>
        <dbReference type="ChEBI" id="CHEBI:60240"/>
    </ligand>
</feature>
<feature type="binding site" evidence="1">
    <location>
        <position position="53"/>
    </location>
    <ligand>
        <name>a divalent metal cation</name>
        <dbReference type="ChEBI" id="CHEBI:60240"/>
    </ligand>
</feature>
<feature type="binding site" evidence="1">
    <location>
        <position position="144"/>
    </location>
    <ligand>
        <name>a divalent metal cation</name>
        <dbReference type="ChEBI" id="CHEBI:60240"/>
    </ligand>
</feature>
<dbReference type="EC" id="3.1.26.4" evidence="1"/>
<dbReference type="EMBL" id="CP000360">
    <property type="protein sequence ID" value="ABF41879.1"/>
    <property type="molecule type" value="Genomic_DNA"/>
</dbReference>
<dbReference type="RefSeq" id="WP_011523680.1">
    <property type="nucleotide sequence ID" value="NC_008009.1"/>
</dbReference>
<dbReference type="SMR" id="Q1IMM1"/>
<dbReference type="STRING" id="204669.Acid345_2878"/>
<dbReference type="EnsemblBacteria" id="ABF41879">
    <property type="protein sequence ID" value="ABF41879"/>
    <property type="gene ID" value="Acid345_2878"/>
</dbReference>
<dbReference type="KEGG" id="aba:Acid345_2878"/>
<dbReference type="eggNOG" id="COG0164">
    <property type="taxonomic scope" value="Bacteria"/>
</dbReference>
<dbReference type="HOGENOM" id="CLU_036532_3_2_0"/>
<dbReference type="OrthoDB" id="9803420at2"/>
<dbReference type="Proteomes" id="UP000002432">
    <property type="component" value="Chromosome"/>
</dbReference>
<dbReference type="GO" id="GO:0005737">
    <property type="term" value="C:cytoplasm"/>
    <property type="evidence" value="ECO:0007669"/>
    <property type="project" value="UniProtKB-SubCell"/>
</dbReference>
<dbReference type="GO" id="GO:0032299">
    <property type="term" value="C:ribonuclease H2 complex"/>
    <property type="evidence" value="ECO:0007669"/>
    <property type="project" value="TreeGrafter"/>
</dbReference>
<dbReference type="GO" id="GO:0030145">
    <property type="term" value="F:manganese ion binding"/>
    <property type="evidence" value="ECO:0007669"/>
    <property type="project" value="UniProtKB-UniRule"/>
</dbReference>
<dbReference type="GO" id="GO:0003723">
    <property type="term" value="F:RNA binding"/>
    <property type="evidence" value="ECO:0007669"/>
    <property type="project" value="InterPro"/>
</dbReference>
<dbReference type="GO" id="GO:0004523">
    <property type="term" value="F:RNA-DNA hybrid ribonuclease activity"/>
    <property type="evidence" value="ECO:0007669"/>
    <property type="project" value="UniProtKB-UniRule"/>
</dbReference>
<dbReference type="GO" id="GO:0043137">
    <property type="term" value="P:DNA replication, removal of RNA primer"/>
    <property type="evidence" value="ECO:0007669"/>
    <property type="project" value="TreeGrafter"/>
</dbReference>
<dbReference type="GO" id="GO:0006298">
    <property type="term" value="P:mismatch repair"/>
    <property type="evidence" value="ECO:0007669"/>
    <property type="project" value="TreeGrafter"/>
</dbReference>
<dbReference type="CDD" id="cd07182">
    <property type="entry name" value="RNase_HII_bacteria_HII_like"/>
    <property type="match status" value="1"/>
</dbReference>
<dbReference type="Gene3D" id="3.30.420.10">
    <property type="entry name" value="Ribonuclease H-like superfamily/Ribonuclease H"/>
    <property type="match status" value="1"/>
</dbReference>
<dbReference type="HAMAP" id="MF_00052_B">
    <property type="entry name" value="RNase_HII_B"/>
    <property type="match status" value="1"/>
</dbReference>
<dbReference type="InterPro" id="IPR022898">
    <property type="entry name" value="RNase_HII"/>
</dbReference>
<dbReference type="InterPro" id="IPR001352">
    <property type="entry name" value="RNase_HII/HIII"/>
</dbReference>
<dbReference type="InterPro" id="IPR024567">
    <property type="entry name" value="RNase_HII/HIII_dom"/>
</dbReference>
<dbReference type="InterPro" id="IPR012337">
    <property type="entry name" value="RNaseH-like_sf"/>
</dbReference>
<dbReference type="InterPro" id="IPR036397">
    <property type="entry name" value="RNaseH_sf"/>
</dbReference>
<dbReference type="NCBIfam" id="NF000594">
    <property type="entry name" value="PRK00015.1-1"/>
    <property type="match status" value="1"/>
</dbReference>
<dbReference type="NCBIfam" id="NF000595">
    <property type="entry name" value="PRK00015.1-3"/>
    <property type="match status" value="1"/>
</dbReference>
<dbReference type="PANTHER" id="PTHR10954">
    <property type="entry name" value="RIBONUCLEASE H2 SUBUNIT A"/>
    <property type="match status" value="1"/>
</dbReference>
<dbReference type="PANTHER" id="PTHR10954:SF18">
    <property type="entry name" value="RIBONUCLEASE HII"/>
    <property type="match status" value="1"/>
</dbReference>
<dbReference type="Pfam" id="PF01351">
    <property type="entry name" value="RNase_HII"/>
    <property type="match status" value="1"/>
</dbReference>
<dbReference type="SUPFAM" id="SSF53098">
    <property type="entry name" value="Ribonuclease H-like"/>
    <property type="match status" value="1"/>
</dbReference>
<dbReference type="PROSITE" id="PS51975">
    <property type="entry name" value="RNASE_H_2"/>
    <property type="match status" value="1"/>
</dbReference>
<protein>
    <recommendedName>
        <fullName evidence="1">Ribonuclease HII</fullName>
        <shortName evidence="1">RNase HII</shortName>
        <ecNumber evidence="1">3.1.26.4</ecNumber>
    </recommendedName>
</protein>
<keyword id="KW-0963">Cytoplasm</keyword>
<keyword id="KW-0255">Endonuclease</keyword>
<keyword id="KW-0378">Hydrolase</keyword>
<keyword id="KW-0464">Manganese</keyword>
<keyword id="KW-0479">Metal-binding</keyword>
<keyword id="KW-0540">Nuclease</keyword>
<keyword id="KW-1185">Reference proteome</keyword>
<organism>
    <name type="scientific">Koribacter versatilis (strain Ellin345)</name>
    <dbReference type="NCBI Taxonomy" id="204669"/>
    <lineage>
        <taxon>Bacteria</taxon>
        <taxon>Pseudomonadati</taxon>
        <taxon>Acidobacteriota</taxon>
        <taxon>Terriglobia</taxon>
        <taxon>Terriglobales</taxon>
        <taxon>Candidatus Korobacteraceae</taxon>
        <taxon>Candidatus Korobacter</taxon>
    </lineage>
</organism>